<comment type="subcellular location">
    <subcellularLocation>
        <location evidence="1">Endoplasmic reticulum membrane</location>
        <topology evidence="1">Single-pass membrane protein</topology>
    </subcellularLocation>
</comment>
<feature type="chain" id="PRO_0000244084" description="DnaJ homolog subfamily C member 18">
    <location>
        <begin position="1"/>
        <end position="358"/>
    </location>
</feature>
<feature type="transmembrane region" description="Helical" evidence="2">
    <location>
        <begin position="228"/>
        <end position="248"/>
    </location>
</feature>
<feature type="domain" description="J" evidence="3">
    <location>
        <begin position="82"/>
        <end position="146"/>
    </location>
</feature>
<organism>
    <name type="scientific">Bos taurus</name>
    <name type="common">Bovine</name>
    <dbReference type="NCBI Taxonomy" id="9913"/>
    <lineage>
        <taxon>Eukaryota</taxon>
        <taxon>Metazoa</taxon>
        <taxon>Chordata</taxon>
        <taxon>Craniata</taxon>
        <taxon>Vertebrata</taxon>
        <taxon>Euteleostomi</taxon>
        <taxon>Mammalia</taxon>
        <taxon>Eutheria</taxon>
        <taxon>Laurasiatheria</taxon>
        <taxon>Artiodactyla</taxon>
        <taxon>Ruminantia</taxon>
        <taxon>Pecora</taxon>
        <taxon>Bovidae</taxon>
        <taxon>Bovinae</taxon>
        <taxon>Bos</taxon>
    </lineage>
</organism>
<reference key="1">
    <citation type="journal article" date="2005" name="BMC Genomics">
        <title>Characterization of 954 bovine full-CDS cDNA sequences.</title>
        <authorList>
            <person name="Harhay G.P."/>
            <person name="Sonstegard T.S."/>
            <person name="Keele J.W."/>
            <person name="Heaton M.P."/>
            <person name="Clawson M.L."/>
            <person name="Snelling W.M."/>
            <person name="Wiedmann R.T."/>
            <person name="Van Tassell C.P."/>
            <person name="Smith T.P.L."/>
        </authorList>
    </citation>
    <scope>NUCLEOTIDE SEQUENCE [LARGE SCALE MRNA]</scope>
</reference>
<reference key="2">
    <citation type="submission" date="2005-10" db="EMBL/GenBank/DDBJ databases">
        <authorList>
            <consortium name="NIH - Mammalian Gene Collection (MGC) project"/>
        </authorList>
    </citation>
    <scope>NUCLEOTIDE SEQUENCE [LARGE SCALE MRNA]</scope>
    <source>
        <strain>Hereford</strain>
        <tissue>Ascending colon</tissue>
    </source>
</reference>
<proteinExistence type="evidence at transcript level"/>
<gene>
    <name type="primary">DNAJC18</name>
</gene>
<dbReference type="EMBL" id="BT020743">
    <property type="protein sequence ID" value="AAX08760.1"/>
    <property type="molecule type" value="mRNA"/>
</dbReference>
<dbReference type="EMBL" id="BC108139">
    <property type="protein sequence ID" value="AAI08140.1"/>
    <property type="molecule type" value="mRNA"/>
</dbReference>
<dbReference type="RefSeq" id="NP_001015649.1">
    <property type="nucleotide sequence ID" value="NM_001015649.2"/>
</dbReference>
<dbReference type="SMR" id="Q5EA26"/>
<dbReference type="FunCoup" id="Q5EA26">
    <property type="interactions" value="2472"/>
</dbReference>
<dbReference type="STRING" id="9913.ENSBTAP00000002952"/>
<dbReference type="PaxDb" id="9913-ENSBTAP00000002952"/>
<dbReference type="Ensembl" id="ENSBTAT00000002952.4">
    <property type="protein sequence ID" value="ENSBTAP00000002952.3"/>
    <property type="gene ID" value="ENSBTAG00000002286.5"/>
</dbReference>
<dbReference type="GeneID" id="533660"/>
<dbReference type="KEGG" id="bta:533660"/>
<dbReference type="CTD" id="202052"/>
<dbReference type="VEuPathDB" id="HostDB:ENSBTAG00000002286"/>
<dbReference type="VGNC" id="VGNC:52230">
    <property type="gene designation" value="DNAJC18"/>
</dbReference>
<dbReference type="eggNOG" id="KOG0714">
    <property type="taxonomic scope" value="Eukaryota"/>
</dbReference>
<dbReference type="GeneTree" id="ENSGT00940000160925"/>
<dbReference type="HOGENOM" id="CLU_043579_3_0_1"/>
<dbReference type="InParanoid" id="Q5EA26"/>
<dbReference type="OMA" id="TGQARHY"/>
<dbReference type="OrthoDB" id="552049at2759"/>
<dbReference type="TreeFam" id="TF105145"/>
<dbReference type="Proteomes" id="UP000009136">
    <property type="component" value="Chromosome 7"/>
</dbReference>
<dbReference type="Bgee" id="ENSBTAG00000002286">
    <property type="expression patterns" value="Expressed in occipital lobe and 105 other cell types or tissues"/>
</dbReference>
<dbReference type="GO" id="GO:0005789">
    <property type="term" value="C:endoplasmic reticulum membrane"/>
    <property type="evidence" value="ECO:0000250"/>
    <property type="project" value="UniProtKB"/>
</dbReference>
<dbReference type="GO" id="GO:0030544">
    <property type="term" value="F:Hsp70 protein binding"/>
    <property type="evidence" value="ECO:0000318"/>
    <property type="project" value="GO_Central"/>
</dbReference>
<dbReference type="GO" id="GO:0071218">
    <property type="term" value="P:cellular response to misfolded protein"/>
    <property type="evidence" value="ECO:0000318"/>
    <property type="project" value="GO_Central"/>
</dbReference>
<dbReference type="GO" id="GO:0051085">
    <property type="term" value="P:chaperone cofactor-dependent protein refolding"/>
    <property type="evidence" value="ECO:0000318"/>
    <property type="project" value="GO_Central"/>
</dbReference>
<dbReference type="CDD" id="cd06257">
    <property type="entry name" value="DnaJ"/>
    <property type="match status" value="1"/>
</dbReference>
<dbReference type="FunFam" id="1.10.287.110:FF:000004">
    <property type="entry name" value="DnaJ (Hsp40) homolog, subfamily B, member 14"/>
    <property type="match status" value="1"/>
</dbReference>
<dbReference type="Gene3D" id="1.10.287.110">
    <property type="entry name" value="DnaJ domain"/>
    <property type="match status" value="1"/>
</dbReference>
<dbReference type="InterPro" id="IPR001623">
    <property type="entry name" value="DnaJ_domain"/>
</dbReference>
<dbReference type="InterPro" id="IPR018253">
    <property type="entry name" value="DnaJ_domain_CS"/>
</dbReference>
<dbReference type="InterPro" id="IPR051100">
    <property type="entry name" value="DnaJ_subfamily_B/C"/>
</dbReference>
<dbReference type="InterPro" id="IPR015399">
    <property type="entry name" value="DUF1977_DnaJ-like"/>
</dbReference>
<dbReference type="InterPro" id="IPR036869">
    <property type="entry name" value="J_dom_sf"/>
</dbReference>
<dbReference type="PANTHER" id="PTHR43908">
    <property type="entry name" value="AT29763P-RELATED"/>
    <property type="match status" value="1"/>
</dbReference>
<dbReference type="PANTHER" id="PTHR43908:SF2">
    <property type="entry name" value="DNAJ HOMOLOG SUBFAMILY C MEMBER 18"/>
    <property type="match status" value="1"/>
</dbReference>
<dbReference type="Pfam" id="PF00226">
    <property type="entry name" value="DnaJ"/>
    <property type="match status" value="1"/>
</dbReference>
<dbReference type="Pfam" id="PF09320">
    <property type="entry name" value="DUF1977"/>
    <property type="match status" value="1"/>
</dbReference>
<dbReference type="PRINTS" id="PR00625">
    <property type="entry name" value="JDOMAIN"/>
</dbReference>
<dbReference type="SMART" id="SM00271">
    <property type="entry name" value="DnaJ"/>
    <property type="match status" value="1"/>
</dbReference>
<dbReference type="SUPFAM" id="SSF46565">
    <property type="entry name" value="Chaperone J-domain"/>
    <property type="match status" value="1"/>
</dbReference>
<dbReference type="PROSITE" id="PS00636">
    <property type="entry name" value="DNAJ_1"/>
    <property type="match status" value="1"/>
</dbReference>
<dbReference type="PROSITE" id="PS50076">
    <property type="entry name" value="DNAJ_2"/>
    <property type="match status" value="1"/>
</dbReference>
<keyword id="KW-0143">Chaperone</keyword>
<keyword id="KW-0256">Endoplasmic reticulum</keyword>
<keyword id="KW-0472">Membrane</keyword>
<keyword id="KW-1185">Reference proteome</keyword>
<keyword id="KW-0812">Transmembrane</keyword>
<keyword id="KW-1133">Transmembrane helix</keyword>
<evidence type="ECO:0000250" key="1">
    <source>
        <dbReference type="UniProtKB" id="Q9H819"/>
    </source>
</evidence>
<evidence type="ECO:0000255" key="2"/>
<evidence type="ECO:0000255" key="3">
    <source>
        <dbReference type="PROSITE-ProRule" id="PRU00286"/>
    </source>
</evidence>
<name>DJC18_BOVIN</name>
<protein>
    <recommendedName>
        <fullName>DnaJ homolog subfamily C member 18</fullName>
    </recommendedName>
</protein>
<sequence>MAATLGSGERWTEAYIDAVRRNKYPEDRPPESHDPCGCCNCMKGQKEKKSENEWSQTRQGEGNSTYTEEQLLGVQRIKKCRNYYEILGVSRDASDEELKKAYRKLALKFHPDKNCAPGATDAFKAIGNAFAVLSNPDKRLRYDEYGDEQVTFTAPRARPYNYYRDFETDITPEELFNVFFGGHFPTGNIHMFSNVTDDTHYYRRRHRHERMQTRKEEEEDKPQTTYSAFIQLLPVLVIVIISVITQLLAANPPYSLFYKSTLGHTISRETQNLQVPYFVDKNFDKAYRGASLRDLEKTIEKDYIDYIQTSCWKEKQQKSELTNLAGLYRDERLKQKAESLKLENCEKLSKLIGLRRGG</sequence>
<accession>Q5EA26</accession>